<sequence length="294" mass="33610">MITRLFAQLVSLSIVTYWNDAIVATNFSWLFITFFVMTFTFRTFSRYFKKPIIWTLYFFLCLIAFLLLWAARIHINILFSFAFGDVYSFFMAGVFLFYGFGELLPIGSDSDVGEASWVVNPATGASGSGGNGWTESAANDPAREVSLAPFPPQLTHPVPFPAEPGSPDPVSPPPPIASFYSRIERAESLHAGNIELAEDLQRIQEMERNLENERSPYRGRELAARIDWEVRELEGKVARNRAWDMVRDAQLDIWRQGLDQELVRQQENESRLEERRFQSHSTNSLFEADSSRDN</sequence>
<accession>P92550</accession>
<accession>Q1ZXW7</accession>
<accession>Q8S890</accession>
<keyword id="KW-0175">Coiled coil</keyword>
<keyword id="KW-0472">Membrane</keyword>
<keyword id="KW-0496">Mitochondrion</keyword>
<keyword id="KW-1185">Reference proteome</keyword>
<keyword id="KW-0812">Transmembrane</keyword>
<keyword id="KW-1133">Transmembrane helix</keyword>
<evidence type="ECO:0000255" key="1"/>
<evidence type="ECO:0000256" key="2">
    <source>
        <dbReference type="SAM" id="MobiDB-lite"/>
    </source>
</evidence>
<evidence type="ECO:0000305" key="3"/>
<gene>
    <name type="ordered locus">AtMg01200</name>
</gene>
<proteinExistence type="predicted"/>
<comment type="subcellular location">
    <subcellularLocation>
        <location evidence="3">Mitochondrion membrane</location>
        <topology evidence="3">Multi-pass membrane protein</topology>
    </subcellularLocation>
</comment>
<comment type="miscellaneous">
    <text>A stretch of 270 kb of the mitochondrial genome is duplicated within the centromere of chromosome 2 resulting in the duplication of the gene. The expression of this duplicated gene (At2g07698) is not demonstrated.</text>
</comment>
<comment type="sequence caution" evidence="3">
    <conflict type="erroneous gene model prediction">
        <sequence resource="EMBL-CDS" id="AAM15496"/>
    </conflict>
</comment>
<geneLocation type="mitochondrion"/>
<feature type="chain" id="PRO_0000196816" description="Uncharacterized mitochondrial protein AtMg01200">
    <location>
        <begin position="1"/>
        <end position="294"/>
    </location>
</feature>
<feature type="transmembrane region" description="Helical" evidence="1">
    <location>
        <begin position="21"/>
        <end position="41"/>
    </location>
</feature>
<feature type="transmembrane region" description="Helical" evidence="1">
    <location>
        <begin position="51"/>
        <end position="71"/>
    </location>
</feature>
<feature type="transmembrane region" description="Helical" evidence="1">
    <location>
        <begin position="77"/>
        <end position="97"/>
    </location>
</feature>
<feature type="region of interest" description="Disordered" evidence="2">
    <location>
        <begin position="156"/>
        <end position="176"/>
    </location>
</feature>
<feature type="region of interest" description="Disordered" evidence="2">
    <location>
        <begin position="265"/>
        <end position="294"/>
    </location>
</feature>
<feature type="coiled-coil region" evidence="1">
    <location>
        <begin position="184"/>
        <end position="215"/>
    </location>
</feature>
<feature type="compositionally biased region" description="Basic and acidic residues" evidence="2">
    <location>
        <begin position="265"/>
        <end position="277"/>
    </location>
</feature>
<feature type="sequence conflict" description="In Ref. 3; AAM15496." evidence="3" ref="3">
    <original>L</original>
    <variation>F</variation>
    <location>
        <position position="56"/>
    </location>
</feature>
<feature type="sequence conflict" description="In Ref. 3; AAM15496." evidence="3" ref="3">
    <original>P</original>
    <variation>L</variation>
    <location>
        <position position="152"/>
    </location>
</feature>
<dbReference type="EMBL" id="Y08501">
    <property type="protein sequence ID" value="CAA69803.1"/>
    <property type="molecule type" value="Genomic_DNA"/>
</dbReference>
<dbReference type="EMBL" id="BK010421">
    <property type="status" value="NOT_ANNOTATED_CDS"/>
    <property type="molecule type" value="Genomic_DNA"/>
</dbReference>
<dbReference type="EMBL" id="AC007729">
    <property type="protein sequence ID" value="AAM15496.1"/>
    <property type="status" value="ALT_SEQ"/>
    <property type="molecule type" value="Genomic_DNA"/>
</dbReference>
<dbReference type="RefSeq" id="NP_085572.1">
    <property type="nucleotide sequence ID" value="NC_001284.2"/>
</dbReference>
<dbReference type="RefSeq" id="NP_178788.1">
    <property type="nucleotide sequence ID" value="NM_126747.3"/>
</dbReference>
<dbReference type="SMR" id="P92550"/>
<dbReference type="BioGRID" id="763">
    <property type="interactions" value="6"/>
</dbReference>
<dbReference type="STRING" id="3702.P92550"/>
<dbReference type="PaxDb" id="3702-ATMG01200.1"/>
<dbReference type="ProteomicsDB" id="238752"/>
<dbReference type="EnsemblPlants" id="ATMG01200.1">
    <property type="protein sequence ID" value="ATMG01200.1"/>
    <property type="gene ID" value="ATMG01200"/>
</dbReference>
<dbReference type="Gramene" id="ATMG01200.1">
    <property type="protein sequence ID" value="ATMG01200.1"/>
    <property type="gene ID" value="ATMG01200"/>
</dbReference>
<dbReference type="KEGG" id="ath:AT2G07698"/>
<dbReference type="Araport" id="ATMG01200"/>
<dbReference type="TAIR" id="ATMG01200">
    <property type="gene designation" value="ORF294"/>
</dbReference>
<dbReference type="HOGENOM" id="CLU_947804_0_0_1"/>
<dbReference type="InParanoid" id="P92550"/>
<dbReference type="PRO" id="PR:P92550"/>
<dbReference type="Proteomes" id="UP000006548">
    <property type="component" value="Mitochondrion MT"/>
</dbReference>
<dbReference type="ExpressionAtlas" id="P92550">
    <property type="expression patterns" value="baseline and differential"/>
</dbReference>
<dbReference type="GO" id="GO:0031966">
    <property type="term" value="C:mitochondrial membrane"/>
    <property type="evidence" value="ECO:0007669"/>
    <property type="project" value="UniProtKB-SubCell"/>
</dbReference>
<dbReference type="InterPro" id="IPR052694">
    <property type="entry name" value="Mt_uS3-like"/>
</dbReference>
<dbReference type="PANTHER" id="PTHR35289:SF1">
    <property type="entry name" value="ATP SYNTHASE 9 MITOCHONDRIAL-RELATED"/>
    <property type="match status" value="1"/>
</dbReference>
<dbReference type="PANTHER" id="PTHR35289">
    <property type="entry name" value="TRANSMEMBRANE PROTEIN"/>
    <property type="match status" value="1"/>
</dbReference>
<reference key="1">
    <citation type="journal article" date="1997" name="Nat. Genet.">
        <title>The mitochondrial genome of Arabidopsis thaliana contains 57 genes in 366,924 nucleotides.</title>
        <authorList>
            <person name="Unseld M."/>
            <person name="Marienfeld J.R."/>
            <person name="Brandt P."/>
            <person name="Brennicke A."/>
        </authorList>
    </citation>
    <scope>NUCLEOTIDE SEQUENCE [LARGE SCALE GENOMIC DNA]</scope>
    <source>
        <strain>cv. C24</strain>
    </source>
</reference>
<reference key="2">
    <citation type="journal article" date="2018" name="Plant Cell">
        <title>Correction of persistent errors in Arabidopsis reference mitochondrial genomes.</title>
        <authorList>
            <person name="Sloan D.B."/>
            <person name="Wu Z."/>
            <person name="Sharbrough J."/>
        </authorList>
    </citation>
    <scope>NUCLEOTIDE SEQUENCE [LARGE SCALE GENOMIC DNA]</scope>
    <source>
        <strain>cv. Columbia</strain>
    </source>
</reference>
<reference key="3">
    <citation type="journal article" date="1999" name="Nature">
        <title>Sequence and analysis of chromosome 2 of the plant Arabidopsis thaliana.</title>
        <authorList>
            <person name="Lin X."/>
            <person name="Kaul S."/>
            <person name="Rounsley S.D."/>
            <person name="Shea T.P."/>
            <person name="Benito M.-I."/>
            <person name="Town C.D."/>
            <person name="Fujii C.Y."/>
            <person name="Mason T.M."/>
            <person name="Bowman C.L."/>
            <person name="Barnstead M.E."/>
            <person name="Feldblyum T.V."/>
            <person name="Buell C.R."/>
            <person name="Ketchum K.A."/>
            <person name="Lee J.J."/>
            <person name="Ronning C.M."/>
            <person name="Koo H.L."/>
            <person name="Moffat K.S."/>
            <person name="Cronin L.A."/>
            <person name="Shen M."/>
            <person name="Pai G."/>
            <person name="Van Aken S."/>
            <person name="Umayam L."/>
            <person name="Tallon L.J."/>
            <person name="Gill J.E."/>
            <person name="Adams M.D."/>
            <person name="Carrera A.J."/>
            <person name="Creasy T.H."/>
            <person name="Goodman H.M."/>
            <person name="Somerville C.R."/>
            <person name="Copenhaver G.P."/>
            <person name="Preuss D."/>
            <person name="Nierman W.C."/>
            <person name="White O."/>
            <person name="Eisen J.A."/>
            <person name="Salzberg S.L."/>
            <person name="Fraser C.M."/>
            <person name="Venter J.C."/>
        </authorList>
    </citation>
    <scope>NUCLEOTIDE SEQUENCE [LARGE SCALE GENOMIC DNA] (AT2G07698)</scope>
    <source>
        <strain>cv. Columbia</strain>
    </source>
</reference>
<organism>
    <name type="scientific">Arabidopsis thaliana</name>
    <name type="common">Mouse-ear cress</name>
    <dbReference type="NCBI Taxonomy" id="3702"/>
    <lineage>
        <taxon>Eukaryota</taxon>
        <taxon>Viridiplantae</taxon>
        <taxon>Streptophyta</taxon>
        <taxon>Embryophyta</taxon>
        <taxon>Tracheophyta</taxon>
        <taxon>Spermatophyta</taxon>
        <taxon>Magnoliopsida</taxon>
        <taxon>eudicotyledons</taxon>
        <taxon>Gunneridae</taxon>
        <taxon>Pentapetalae</taxon>
        <taxon>rosids</taxon>
        <taxon>malvids</taxon>
        <taxon>Brassicales</taxon>
        <taxon>Brassicaceae</taxon>
        <taxon>Camelineae</taxon>
        <taxon>Arabidopsis</taxon>
    </lineage>
</organism>
<protein>
    <recommendedName>
        <fullName>Uncharacterized mitochondrial protein AtMg01200</fullName>
    </recommendedName>
    <alternativeName>
        <fullName>ORF294</fullName>
    </alternativeName>
</protein>
<name>M1200_ARATH</name>